<accession>Q1RJ60</accession>
<keyword id="KW-0328">Glycosyltransferase</keyword>
<keyword id="KW-0808">Transferase</keyword>
<feature type="chain" id="PRO_0000293139" description="Uncharacterized glycosyltransferase RBE_0523">
    <location>
        <begin position="1"/>
        <end position="294"/>
    </location>
</feature>
<proteinExistence type="inferred from homology"/>
<sequence>MSELLTKKISAFIITKNEAARIERAINSVKNIADEVIVVDSESTDKTVIIAESLGAKVVVKPWLGYVGQKSFAETICKNDWILNIDADEELSKELQDEIEYIFASQNQDRYLAYQIKLLIMHRNDTRPRIFAPYNKCTRLYNKKFASFANTINSTTHDSVVFNKDVDFANKIYTLNEAAYHYSGTSIEQLVAKANFYSGEQAKDLIKQGKKPSNIRIATEMIWWFFKAFFIRRYFVFGFDGFVDSMIFAFARFLRLAKLRELSLQCNPATRSQDLKTQFVIQDPVDKPRDDNIV</sequence>
<protein>
    <recommendedName>
        <fullName>Uncharacterized glycosyltransferase RBE_0523</fullName>
        <ecNumber>2.4.-.-</ecNumber>
    </recommendedName>
</protein>
<reference key="1">
    <citation type="journal article" date="2006" name="PLoS Genet.">
        <title>Genome sequence of Rickettsia bellii illuminates the role of amoebae in gene exchanges between intracellular pathogens.</title>
        <authorList>
            <person name="Ogata H."/>
            <person name="La Scola B."/>
            <person name="Audic S."/>
            <person name="Renesto P."/>
            <person name="Blanc G."/>
            <person name="Robert C."/>
            <person name="Fournier P.-E."/>
            <person name="Claverie J.-M."/>
            <person name="Raoult D."/>
        </authorList>
    </citation>
    <scope>NUCLEOTIDE SEQUENCE [LARGE SCALE GENOMIC DNA]</scope>
    <source>
        <strain>RML369-C</strain>
    </source>
</reference>
<dbReference type="EC" id="2.4.-.-"/>
<dbReference type="EMBL" id="CP000087">
    <property type="protein sequence ID" value="ABE04604.1"/>
    <property type="molecule type" value="Genomic_DNA"/>
</dbReference>
<dbReference type="RefSeq" id="WP_011477195.1">
    <property type="nucleotide sequence ID" value="NC_007940.1"/>
</dbReference>
<dbReference type="SMR" id="Q1RJ60"/>
<dbReference type="CAZy" id="GT2">
    <property type="family name" value="Glycosyltransferase Family 2"/>
</dbReference>
<dbReference type="KEGG" id="rbe:RBE_0523"/>
<dbReference type="eggNOG" id="COG0463">
    <property type="taxonomic scope" value="Bacteria"/>
</dbReference>
<dbReference type="HOGENOM" id="CLU_065962_1_0_5"/>
<dbReference type="OrthoDB" id="7527830at2"/>
<dbReference type="Proteomes" id="UP000001951">
    <property type="component" value="Chromosome"/>
</dbReference>
<dbReference type="GO" id="GO:0016757">
    <property type="term" value="F:glycosyltransferase activity"/>
    <property type="evidence" value="ECO:0007669"/>
    <property type="project" value="UniProtKB-KW"/>
</dbReference>
<dbReference type="CDD" id="cd02511">
    <property type="entry name" value="Beta4Glucosyltransferase"/>
    <property type="match status" value="1"/>
</dbReference>
<dbReference type="Gene3D" id="3.90.550.10">
    <property type="entry name" value="Spore Coat Polysaccharide Biosynthesis Protein SpsA, Chain A"/>
    <property type="match status" value="1"/>
</dbReference>
<dbReference type="InterPro" id="IPR001173">
    <property type="entry name" value="Glyco_trans_2-like"/>
</dbReference>
<dbReference type="InterPro" id="IPR029044">
    <property type="entry name" value="Nucleotide-diphossugar_trans"/>
</dbReference>
<dbReference type="PANTHER" id="PTHR43630:SF2">
    <property type="entry name" value="GLYCOSYLTRANSFERASE"/>
    <property type="match status" value="1"/>
</dbReference>
<dbReference type="PANTHER" id="PTHR43630">
    <property type="entry name" value="POLY-BETA-1,6-N-ACETYL-D-GLUCOSAMINE SYNTHASE"/>
    <property type="match status" value="1"/>
</dbReference>
<dbReference type="Pfam" id="PF00535">
    <property type="entry name" value="Glycos_transf_2"/>
    <property type="match status" value="1"/>
</dbReference>
<dbReference type="SUPFAM" id="SSF53448">
    <property type="entry name" value="Nucleotide-diphospho-sugar transferases"/>
    <property type="match status" value="1"/>
</dbReference>
<comment type="similarity">
    <text evidence="1">Belongs to the glycosyltransferase 2 family. WaaE/KdtX subfamily.</text>
</comment>
<evidence type="ECO:0000305" key="1"/>
<gene>
    <name type="ordered locus">RBE_0523</name>
</gene>
<name>Y523_RICBR</name>
<organism>
    <name type="scientific">Rickettsia bellii (strain RML369-C)</name>
    <dbReference type="NCBI Taxonomy" id="336407"/>
    <lineage>
        <taxon>Bacteria</taxon>
        <taxon>Pseudomonadati</taxon>
        <taxon>Pseudomonadota</taxon>
        <taxon>Alphaproteobacteria</taxon>
        <taxon>Rickettsiales</taxon>
        <taxon>Rickettsiaceae</taxon>
        <taxon>Rickettsieae</taxon>
        <taxon>Rickettsia</taxon>
        <taxon>belli group</taxon>
    </lineage>
</organism>